<evidence type="ECO:0000250" key="1">
    <source>
        <dbReference type="UniProtKB" id="Q8BZH0"/>
    </source>
</evidence>
<evidence type="ECO:0000250" key="2">
    <source>
        <dbReference type="UniProtKB" id="Q96H72"/>
    </source>
</evidence>
<evidence type="ECO:0000255" key="3"/>
<evidence type="ECO:0000256" key="4">
    <source>
        <dbReference type="SAM" id="MobiDB-lite"/>
    </source>
</evidence>
<evidence type="ECO:0000305" key="5"/>
<feature type="chain" id="PRO_0000312313" description="Zinc transporter ZIP13">
    <location>
        <begin position="1"/>
        <end position="366"/>
    </location>
</feature>
<feature type="topological domain" description="Lumenal" evidence="3">
    <location>
        <begin position="1"/>
        <end position="5"/>
    </location>
</feature>
<feature type="transmembrane region" description="Helical" evidence="3">
    <location>
        <begin position="6"/>
        <end position="26"/>
    </location>
</feature>
<feature type="topological domain" description="Cytoplasmic" evidence="3">
    <location>
        <begin position="27"/>
        <end position="57"/>
    </location>
</feature>
<feature type="transmembrane region" description="Helical" evidence="3">
    <location>
        <begin position="58"/>
        <end position="78"/>
    </location>
</feature>
<feature type="topological domain" description="Lumenal" evidence="3">
    <location>
        <begin position="79"/>
        <end position="97"/>
    </location>
</feature>
<feature type="transmembrane region" description="Helical" evidence="3">
    <location>
        <begin position="98"/>
        <end position="118"/>
    </location>
</feature>
<feature type="topological domain" description="Cytoplasmic" evidence="3">
    <location>
        <begin position="119"/>
        <end position="137"/>
    </location>
</feature>
<feature type="transmembrane region" description="Helical" evidence="3">
    <location>
        <begin position="138"/>
        <end position="158"/>
    </location>
</feature>
<feature type="topological domain" description="Lumenal" evidence="3">
    <location>
        <begin position="159"/>
        <end position="225"/>
    </location>
</feature>
<feature type="transmembrane region" description="Helical" evidence="3">
    <location>
        <begin position="226"/>
        <end position="246"/>
    </location>
</feature>
<feature type="topological domain" description="Cytoplasmic" evidence="3">
    <location>
        <begin position="247"/>
        <end position="282"/>
    </location>
</feature>
<feature type="transmembrane region" description="Helical" evidence="3">
    <location>
        <begin position="283"/>
        <end position="303"/>
    </location>
</feature>
<feature type="topological domain" description="Lumenal" evidence="3">
    <location>
        <begin position="304"/>
        <end position="313"/>
    </location>
</feature>
<feature type="transmembrane region" description="Helical" evidence="3">
    <location>
        <begin position="314"/>
        <end position="334"/>
    </location>
</feature>
<feature type="topological domain" description="Cytoplasmic" evidence="3">
    <location>
        <begin position="335"/>
        <end position="343"/>
    </location>
</feature>
<feature type="transmembrane region" description="Helical" evidence="3">
    <location>
        <begin position="344"/>
        <end position="364"/>
    </location>
</feature>
<feature type="topological domain" description="Lumenal" evidence="3">
    <location>
        <begin position="365"/>
        <end position="366"/>
    </location>
</feature>
<feature type="region of interest" description="Disordered" evidence="4">
    <location>
        <begin position="183"/>
        <end position="205"/>
    </location>
</feature>
<feature type="short sequence motif" description="XEXPHE-motif">
    <location>
        <begin position="261"/>
        <end position="266"/>
    </location>
</feature>
<comment type="function">
    <text evidence="1">Functions as a zinc transporter transporting Zn(2+) from the Golgi apparatus to the cytosol and thus influences the zinc level at least in areas of the cytosol.</text>
</comment>
<comment type="catalytic activity">
    <reaction evidence="1">
        <text>Zn(2+)(in) = Zn(2+)(out)</text>
        <dbReference type="Rhea" id="RHEA:29351"/>
        <dbReference type="ChEBI" id="CHEBI:29105"/>
    </reaction>
</comment>
<comment type="subunit">
    <text evidence="2">Homodimer.</text>
</comment>
<comment type="subcellular location">
    <subcellularLocation>
        <location evidence="1">Golgi apparatus membrane</location>
        <topology evidence="2">Multi-pass membrane protein</topology>
    </subcellularLocation>
    <subcellularLocation>
        <location evidence="2">Cytoplasmic vesicle membrane</location>
    </subcellularLocation>
    <subcellularLocation>
        <location evidence="2">Endoplasmic reticulum membrane</location>
    </subcellularLocation>
</comment>
<comment type="similarity">
    <text evidence="5">Belongs to the ZIP transporter (TC 2.A.5) family.</text>
</comment>
<proteinExistence type="evidence at transcript level"/>
<keyword id="KW-0968">Cytoplasmic vesicle</keyword>
<keyword id="KW-0256">Endoplasmic reticulum</keyword>
<keyword id="KW-0333">Golgi apparatus</keyword>
<keyword id="KW-0406">Ion transport</keyword>
<keyword id="KW-0472">Membrane</keyword>
<keyword id="KW-1185">Reference proteome</keyword>
<keyword id="KW-0812">Transmembrane</keyword>
<keyword id="KW-1133">Transmembrane helix</keyword>
<keyword id="KW-0813">Transport</keyword>
<keyword id="KW-0862">Zinc</keyword>
<keyword id="KW-0864">Zinc transport</keyword>
<reference key="1">
    <citation type="journal article" date="2005" name="Genome Biol.">
        <title>Full-length cDNAs from chicken bursal lymphocytes to facilitate gene function analysis.</title>
        <authorList>
            <person name="Caldwell R.B."/>
            <person name="Kierzek A.M."/>
            <person name="Arakawa H."/>
            <person name="Bezzubov Y."/>
            <person name="Zaim J."/>
            <person name="Fiedler P."/>
            <person name="Kutter S."/>
            <person name="Blagodatski A."/>
            <person name="Kostovska D."/>
            <person name="Koter M."/>
            <person name="Plachy J."/>
            <person name="Carninci P."/>
            <person name="Hayashizaki Y."/>
            <person name="Buerstedde J.-M."/>
        </authorList>
    </citation>
    <scope>NUCLEOTIDE SEQUENCE [LARGE SCALE MRNA]</scope>
    <source>
        <strain>CB</strain>
        <tissue>Bursa of Fabricius</tissue>
    </source>
</reference>
<protein>
    <recommendedName>
        <fullName evidence="1">Zinc transporter ZIP13</fullName>
    </recommendedName>
    <alternativeName>
        <fullName>Solute carrier family 39 member 13</fullName>
    </alternativeName>
    <alternativeName>
        <fullName>Zrt- and Irt-like protein 13</fullName>
        <shortName>ZIP-13</shortName>
    </alternativeName>
</protein>
<dbReference type="EMBL" id="AJ720964">
    <property type="protein sequence ID" value="CAG32623.1"/>
    <property type="molecule type" value="mRNA"/>
</dbReference>
<dbReference type="RefSeq" id="NP_001008471.1">
    <property type="nucleotide sequence ID" value="NM_001008471.2"/>
</dbReference>
<dbReference type="RefSeq" id="XP_015142500.1">
    <property type="nucleotide sequence ID" value="XM_015287014.3"/>
</dbReference>
<dbReference type="RefSeq" id="XP_015142501.1">
    <property type="nucleotide sequence ID" value="XM_015287015.4"/>
</dbReference>
<dbReference type="RefSeq" id="XP_015142502.1">
    <property type="nucleotide sequence ID" value="XM_015287016.1"/>
</dbReference>
<dbReference type="RefSeq" id="XP_025006474.1">
    <property type="nucleotide sequence ID" value="XM_025150706.3"/>
</dbReference>
<dbReference type="RefSeq" id="XP_040556850.1">
    <property type="nucleotide sequence ID" value="XM_040700916.2"/>
</dbReference>
<dbReference type="RefSeq" id="XP_040556853.1">
    <property type="nucleotide sequence ID" value="XM_040700919.2"/>
</dbReference>
<dbReference type="RefSeq" id="XP_046774290.1">
    <property type="nucleotide sequence ID" value="XM_046918334.1"/>
</dbReference>
<dbReference type="RefSeq" id="XP_046774291.1">
    <property type="nucleotide sequence ID" value="XM_046918335.1"/>
</dbReference>
<dbReference type="RefSeq" id="XP_046774293.1">
    <property type="nucleotide sequence ID" value="XM_046918337.1"/>
</dbReference>
<dbReference type="RefSeq" id="XP_046774294.1">
    <property type="nucleotide sequence ID" value="XM_046918338.1"/>
</dbReference>
<dbReference type="RefSeq" id="XP_046774295.1">
    <property type="nucleotide sequence ID" value="XM_046918339.1"/>
</dbReference>
<dbReference type="RefSeq" id="XP_046774296.1">
    <property type="nucleotide sequence ID" value="XM_046918340.1"/>
</dbReference>
<dbReference type="RefSeq" id="XP_046774297.1">
    <property type="nucleotide sequence ID" value="XM_046918341.1"/>
</dbReference>
<dbReference type="RefSeq" id="XP_046774298.1">
    <property type="nucleotide sequence ID" value="XM_046918342.1"/>
</dbReference>
<dbReference type="RefSeq" id="XP_046774299.1">
    <property type="nucleotide sequence ID" value="XM_046918343.1"/>
</dbReference>
<dbReference type="RefSeq" id="XP_046774300.1">
    <property type="nucleotide sequence ID" value="XM_046918344.1"/>
</dbReference>
<dbReference type="RefSeq" id="XP_046774301.1">
    <property type="nucleotide sequence ID" value="XM_046918345.1"/>
</dbReference>
<dbReference type="RefSeq" id="XP_046774302.1">
    <property type="nucleotide sequence ID" value="XM_046918346.1"/>
</dbReference>
<dbReference type="RefSeq" id="XP_046774303.1">
    <property type="nucleotide sequence ID" value="XM_046918347.1"/>
</dbReference>
<dbReference type="RefSeq" id="XP_046774304.1">
    <property type="nucleotide sequence ID" value="XM_046918348.1"/>
</dbReference>
<dbReference type="RefSeq" id="XP_046774305.1">
    <property type="nucleotide sequence ID" value="XM_046918349.1"/>
</dbReference>
<dbReference type="RefSeq" id="XP_046774306.1">
    <property type="nucleotide sequence ID" value="XM_046918350.1"/>
</dbReference>
<dbReference type="RefSeq" id="XP_046797632.1">
    <property type="nucleotide sequence ID" value="XM_046941676.1"/>
</dbReference>
<dbReference type="RefSeq" id="XP_046797633.1">
    <property type="nucleotide sequence ID" value="XM_046941677.1"/>
</dbReference>
<dbReference type="RefSeq" id="XP_046797634.1">
    <property type="nucleotide sequence ID" value="XM_046941678.1"/>
</dbReference>
<dbReference type="RefSeq" id="XP_046797635.1">
    <property type="nucleotide sequence ID" value="XM_046941679.1"/>
</dbReference>
<dbReference type="RefSeq" id="XP_046797636.1">
    <property type="nucleotide sequence ID" value="XM_046941680.1"/>
</dbReference>
<dbReference type="RefSeq" id="XP_046797637.1">
    <property type="nucleotide sequence ID" value="XM_046941681.1"/>
</dbReference>
<dbReference type="RefSeq" id="XP_046797638.1">
    <property type="nucleotide sequence ID" value="XM_046941682.1"/>
</dbReference>
<dbReference type="RefSeq" id="XP_046797639.1">
    <property type="nucleotide sequence ID" value="XM_046941683.1"/>
</dbReference>
<dbReference type="RefSeq" id="XP_046797640.1">
    <property type="nucleotide sequence ID" value="XM_046941684.1"/>
</dbReference>
<dbReference type="RefSeq" id="XP_046797641.1">
    <property type="nucleotide sequence ID" value="XM_046941685.1"/>
</dbReference>
<dbReference type="SMR" id="Q5ZI20"/>
<dbReference type="FunCoup" id="Q5ZI20">
    <property type="interactions" value="1386"/>
</dbReference>
<dbReference type="STRING" id="9031.ENSGALP00000070220"/>
<dbReference type="PaxDb" id="9031-ENSGALP00000013168"/>
<dbReference type="Ensembl" id="ENSGALT00010054371.1">
    <property type="protein sequence ID" value="ENSGALP00010032842.1"/>
    <property type="gene ID" value="ENSGALG00010022353.1"/>
</dbReference>
<dbReference type="GeneID" id="423183"/>
<dbReference type="KEGG" id="gga:423183"/>
<dbReference type="CTD" id="91252"/>
<dbReference type="VEuPathDB" id="HostDB:geneid_423183"/>
<dbReference type="eggNOG" id="KOG2694">
    <property type="taxonomic scope" value="Eukaryota"/>
</dbReference>
<dbReference type="GeneTree" id="ENSGT00940000157349"/>
<dbReference type="HOGENOM" id="CLU_015114_0_2_1"/>
<dbReference type="InParanoid" id="Q5ZI20"/>
<dbReference type="OMA" id="HEVPHHI"/>
<dbReference type="OrthoDB" id="200954at2759"/>
<dbReference type="PhylomeDB" id="Q5ZI20"/>
<dbReference type="TreeFam" id="TF318470"/>
<dbReference type="PRO" id="PR:Q5ZI20"/>
<dbReference type="Proteomes" id="UP000000539">
    <property type="component" value="Chromosome 5"/>
</dbReference>
<dbReference type="Bgee" id="ENSGALG00000008122">
    <property type="expression patterns" value="Expressed in heart and 13 other cell types or tissues"/>
</dbReference>
<dbReference type="GO" id="GO:0030659">
    <property type="term" value="C:cytoplasmic vesicle membrane"/>
    <property type="evidence" value="ECO:0000250"/>
    <property type="project" value="UniProtKB"/>
</dbReference>
<dbReference type="GO" id="GO:0005789">
    <property type="term" value="C:endoplasmic reticulum membrane"/>
    <property type="evidence" value="ECO:0007669"/>
    <property type="project" value="UniProtKB-SubCell"/>
</dbReference>
<dbReference type="GO" id="GO:0000139">
    <property type="term" value="C:Golgi membrane"/>
    <property type="evidence" value="ECO:0007669"/>
    <property type="project" value="UniProtKB-SubCell"/>
</dbReference>
<dbReference type="GO" id="GO:0005385">
    <property type="term" value="F:zinc ion transmembrane transporter activity"/>
    <property type="evidence" value="ECO:0000250"/>
    <property type="project" value="UniProtKB"/>
</dbReference>
<dbReference type="GO" id="GO:0006882">
    <property type="term" value="P:intracellular zinc ion homeostasis"/>
    <property type="evidence" value="ECO:0000318"/>
    <property type="project" value="GO_Central"/>
</dbReference>
<dbReference type="GO" id="GO:0071577">
    <property type="term" value="P:zinc ion transmembrane transport"/>
    <property type="evidence" value="ECO:0000318"/>
    <property type="project" value="GO_Central"/>
</dbReference>
<dbReference type="GO" id="GO:0006829">
    <property type="term" value="P:zinc ion transport"/>
    <property type="evidence" value="ECO:0000250"/>
    <property type="project" value="UniProtKB"/>
</dbReference>
<dbReference type="InterPro" id="IPR003689">
    <property type="entry name" value="ZIP"/>
</dbReference>
<dbReference type="PANTHER" id="PTHR16950">
    <property type="entry name" value="ZINC TRANSPORTER SLC39A7 HISTIDINE-RICH MEMBRANE PROTEIN KE4"/>
    <property type="match status" value="1"/>
</dbReference>
<dbReference type="PANTHER" id="PTHR16950:SF16">
    <property type="entry name" value="ZINC TRANSPORTER ZIP13"/>
    <property type="match status" value="1"/>
</dbReference>
<dbReference type="Pfam" id="PF02535">
    <property type="entry name" value="Zip"/>
    <property type="match status" value="1"/>
</dbReference>
<gene>
    <name evidence="2" type="primary">SLC39A13</name>
    <name type="synonym">ZIP13</name>
    <name type="ORF">RCJMB04_31f18</name>
</gene>
<accession>Q5ZI20</accession>
<organism>
    <name type="scientific">Gallus gallus</name>
    <name type="common">Chicken</name>
    <dbReference type="NCBI Taxonomy" id="9031"/>
    <lineage>
        <taxon>Eukaryota</taxon>
        <taxon>Metazoa</taxon>
        <taxon>Chordata</taxon>
        <taxon>Craniata</taxon>
        <taxon>Vertebrata</taxon>
        <taxon>Euteleostomi</taxon>
        <taxon>Archelosauria</taxon>
        <taxon>Archosauria</taxon>
        <taxon>Dinosauria</taxon>
        <taxon>Saurischia</taxon>
        <taxon>Theropoda</taxon>
        <taxon>Coelurosauria</taxon>
        <taxon>Aves</taxon>
        <taxon>Neognathae</taxon>
        <taxon>Galloanserae</taxon>
        <taxon>Galliformes</taxon>
        <taxon>Phasianidae</taxon>
        <taxon>Phasianinae</taxon>
        <taxon>Gallus</taxon>
    </lineage>
</organism>
<sequence length="366" mass="39274">MTKQKLLLNGTFSLILIVACEAQQLPRSHAASSSGPLCEKEAESWGNLLSSERLDAWICSLIGSFMVGLSGIFPLLVIPFETGAALRSEAGSRRLKQLLSFAIGGLLGNVFLHLLPEAWAYTCSAAAGEGQSFQQQKLLGLWVIIGFLTFLALEKIFLEKEEEECPGVGCDYKAPLGKIPNGSGYPPSKVAGKSQRAEKNSTQCNGSSLQSCRTDNRIKISGYLNLLANTIDNFTHGLAVAASFLVSRKVGFLTTMAILLHEIPHEVGDFAILLRAGFDRWSAAKMQLSTALGGIVGACFAICAQSPKGAGETVAWILPFTSGGFLYIALVNVVPDLLEEKNPWNSLQQILLLCTGITVMVLLAHN</sequence>
<name>S39AD_CHICK</name>